<sequence length="270" mass="30786">MGEQQLDCALDLMRRLPPQHCDKNLTDLIDLCPHLVDDLLSTIDQPLKIAADRETGKQYLLCDYNRDGDSYRSPWSNTYDPPLEDGQLPSEKRRKMEIEANAAFESYRDLYFEGGVSSVYFWDLDNGGFAGIVLIKKEGDGAKNITGCWDSIHVIEITERARQAHYKLTSTIMLWLQTNKSSSGVMNLGGSLTRQHEMDAPINDQNTHLANMGRMIEDQESKMRLTINEIYFGKTKKVMSDLRSTEKQSELEKQDEIVRELNNAMANRGN</sequence>
<dbReference type="EMBL" id="Z18806">
    <property type="protein sequence ID" value="CAA79270.1"/>
    <property type="molecule type" value="Genomic_DNA"/>
</dbReference>
<dbReference type="EMBL" id="Z18854">
    <property type="protein sequence ID" value="CAA79306.1"/>
    <property type="molecule type" value="mRNA"/>
</dbReference>
<dbReference type="EMBL" id="Z46935">
    <property type="protein sequence ID" value="CAA87051.1"/>
    <property type="molecule type" value="Genomic_DNA"/>
</dbReference>
<dbReference type="PIR" id="B47734">
    <property type="entry name" value="B47734"/>
</dbReference>
<dbReference type="RefSeq" id="NP_496336.1">
    <property type="nucleotide sequence ID" value="NM_063935.10"/>
</dbReference>
<dbReference type="SMR" id="P34686"/>
<dbReference type="BioGRID" id="39983">
    <property type="interactions" value="21"/>
</dbReference>
<dbReference type="DIP" id="DIP-26957N"/>
<dbReference type="FunCoup" id="P34686">
    <property type="interactions" value="2627"/>
</dbReference>
<dbReference type="IntAct" id="P34686">
    <property type="interactions" value="1"/>
</dbReference>
<dbReference type="STRING" id="6239.M106.5.1"/>
<dbReference type="PaxDb" id="6239-M106.5"/>
<dbReference type="EnsemblMetazoa" id="M106.5.1">
    <property type="protein sequence ID" value="M106.5.1"/>
    <property type="gene ID" value="WBGene00000293"/>
</dbReference>
<dbReference type="GeneID" id="174673"/>
<dbReference type="KEGG" id="cel:CELE_M106.5"/>
<dbReference type="UCSC" id="M106.5.1">
    <property type="organism name" value="c. elegans"/>
</dbReference>
<dbReference type="AGR" id="WB:WBGene00000293"/>
<dbReference type="CTD" id="174673"/>
<dbReference type="WormBase" id="M106.5">
    <property type="protein sequence ID" value="CE01608"/>
    <property type="gene ID" value="WBGene00000293"/>
    <property type="gene designation" value="cap-2"/>
</dbReference>
<dbReference type="eggNOG" id="KOG3174">
    <property type="taxonomic scope" value="Eukaryota"/>
</dbReference>
<dbReference type="GeneTree" id="ENSGT00390000017957"/>
<dbReference type="HOGENOM" id="CLU_045864_1_1_1"/>
<dbReference type="InParanoid" id="P34686"/>
<dbReference type="OMA" id="WSNKYYP"/>
<dbReference type="OrthoDB" id="9979678at2759"/>
<dbReference type="PhylomeDB" id="P34686"/>
<dbReference type="Reactome" id="R-CEL-6807878">
    <property type="pathway name" value="COPI-mediated anterograde transport"/>
</dbReference>
<dbReference type="Reactome" id="R-CEL-6811436">
    <property type="pathway name" value="COPI-independent Golgi-to-ER retrograde traffic"/>
</dbReference>
<dbReference type="Reactome" id="R-CEL-9013405">
    <property type="pathway name" value="RHOD GTPase cycle"/>
</dbReference>
<dbReference type="Reactome" id="R-CEL-9035034">
    <property type="pathway name" value="RHOF GTPase cycle"/>
</dbReference>
<dbReference type="Reactome" id="R-CEL-983231">
    <property type="pathway name" value="Factors involved in megakaryocyte development and platelet production"/>
</dbReference>
<dbReference type="PRO" id="PR:P34686"/>
<dbReference type="Proteomes" id="UP000001940">
    <property type="component" value="Chromosome II"/>
</dbReference>
<dbReference type="Bgee" id="WBGene00000293">
    <property type="expression patterns" value="Expressed in pharyngeal muscle cell (C elegans) and 4 other cell types or tissues"/>
</dbReference>
<dbReference type="GO" id="GO:0005737">
    <property type="term" value="C:cytoplasm"/>
    <property type="evidence" value="ECO:0000314"/>
    <property type="project" value="WormBase"/>
</dbReference>
<dbReference type="GO" id="GO:0005869">
    <property type="term" value="C:dynactin complex"/>
    <property type="evidence" value="ECO:0000314"/>
    <property type="project" value="WormBase"/>
</dbReference>
<dbReference type="GO" id="GO:0008290">
    <property type="term" value="C:F-actin capping protein complex"/>
    <property type="evidence" value="ECO:0000318"/>
    <property type="project" value="GO_Central"/>
</dbReference>
<dbReference type="GO" id="GO:0051015">
    <property type="term" value="F:actin filament binding"/>
    <property type="evidence" value="ECO:0000314"/>
    <property type="project" value="WormBase"/>
</dbReference>
<dbReference type="GO" id="GO:0030036">
    <property type="term" value="P:actin cytoskeleton organization"/>
    <property type="evidence" value="ECO:0000314"/>
    <property type="project" value="WormBase"/>
</dbReference>
<dbReference type="GO" id="GO:0051016">
    <property type="term" value="P:barbed-end actin filament capping"/>
    <property type="evidence" value="ECO:0000318"/>
    <property type="project" value="GO_Central"/>
</dbReference>
<dbReference type="GO" id="GO:0000902">
    <property type="term" value="P:cell morphogenesis"/>
    <property type="evidence" value="ECO:0000318"/>
    <property type="project" value="GO_Central"/>
</dbReference>
<dbReference type="GO" id="GO:0000578">
    <property type="term" value="P:embryonic axis specification"/>
    <property type="evidence" value="ECO:0000315"/>
    <property type="project" value="WormBase"/>
</dbReference>
<dbReference type="GO" id="GO:0051490">
    <property type="term" value="P:negative regulation of filopodium assembly"/>
    <property type="evidence" value="ECO:0000318"/>
    <property type="project" value="GO_Central"/>
</dbReference>
<dbReference type="GO" id="GO:0010591">
    <property type="term" value="P:regulation of lamellipodium assembly"/>
    <property type="evidence" value="ECO:0000318"/>
    <property type="project" value="GO_Central"/>
</dbReference>
<dbReference type="FunFam" id="1.20.58.570:FF:000001">
    <property type="entry name" value="F-actin-capping protein subunit beta"/>
    <property type="match status" value="1"/>
</dbReference>
<dbReference type="FunFam" id="3.90.1150.210:FF:000001">
    <property type="entry name" value="F-actin-capping protein subunit beta"/>
    <property type="match status" value="1"/>
</dbReference>
<dbReference type="Gene3D" id="1.20.58.570">
    <property type="match status" value="1"/>
</dbReference>
<dbReference type="Gene3D" id="3.90.1150.210">
    <property type="entry name" value="F-actin capping protein, beta subunit"/>
    <property type="match status" value="1"/>
</dbReference>
<dbReference type="InterPro" id="IPR037282">
    <property type="entry name" value="CapZ_alpha/beta"/>
</dbReference>
<dbReference type="InterPro" id="IPR042276">
    <property type="entry name" value="CapZ_alpha/beta_2"/>
</dbReference>
<dbReference type="InterPro" id="IPR001698">
    <property type="entry name" value="CAPZB"/>
</dbReference>
<dbReference type="InterPro" id="IPR043175">
    <property type="entry name" value="CAPZB_N"/>
</dbReference>
<dbReference type="InterPro" id="IPR019771">
    <property type="entry name" value="F-actin_capping_bsu_CS"/>
</dbReference>
<dbReference type="PANTHER" id="PTHR10619">
    <property type="entry name" value="F-ACTIN-CAPPING PROTEIN SUBUNIT BETA"/>
    <property type="match status" value="1"/>
</dbReference>
<dbReference type="PANTHER" id="PTHR10619:SF0">
    <property type="entry name" value="F-ACTIN-CAPPING PROTEIN SUBUNIT BETA ISOFORMS 1 AND 2"/>
    <property type="match status" value="1"/>
</dbReference>
<dbReference type="Pfam" id="PF01115">
    <property type="entry name" value="F_actin_cap_B"/>
    <property type="match status" value="1"/>
</dbReference>
<dbReference type="PRINTS" id="PR00192">
    <property type="entry name" value="FACTINCAPB"/>
</dbReference>
<dbReference type="SUPFAM" id="SSF90096">
    <property type="entry name" value="Subunits of heterodimeric actin filament capping protein Capz"/>
    <property type="match status" value="1"/>
</dbReference>
<dbReference type="PROSITE" id="PS00231">
    <property type="entry name" value="F_ACTIN_CAPPING_BETA"/>
    <property type="match status" value="1"/>
</dbReference>
<reference key="1">
    <citation type="journal article" date="1993" name="Mol. Biol. Cell">
        <title>The alpha and beta subunits of nematode actin capping protein function in yeast.</title>
        <authorList>
            <person name="Waddle J.A."/>
            <person name="Cooper J.A."/>
            <person name="Waterston R.H."/>
        </authorList>
    </citation>
    <scope>NUCLEOTIDE SEQUENCE [GENOMIC DNA / MRNA]</scope>
    <source>
        <strain>Bristol N2</strain>
    </source>
</reference>
<reference key="2">
    <citation type="journal article" date="1998" name="Science">
        <title>Genome sequence of the nematode C. elegans: a platform for investigating biology.</title>
        <authorList>
            <consortium name="The C. elegans sequencing consortium"/>
        </authorList>
    </citation>
    <scope>NUCLEOTIDE SEQUENCE [LARGE SCALE GENOMIC DNA]</scope>
    <source>
        <strain>Bristol N2</strain>
    </source>
</reference>
<protein>
    <recommendedName>
        <fullName>F-actin-capping protein subunit beta</fullName>
    </recommendedName>
</protein>
<name>CAPZB_CAEEL</name>
<comment type="function">
    <text>F-actin-capping proteins bind in a Ca(2+)-independent manner to the fast growing ends of actin filaments (barbed end) thereby blocking the exchange of subunits at these ends. Unlike other capping proteins (such as gelsolin and severin), these proteins do not sever actin filaments.</text>
</comment>
<comment type="subunit">
    <text>Component of the F-actin capping complex, composed of a heterodimer of an alpha and a beta subunit.</text>
</comment>
<comment type="subcellular location">
    <subcellularLocation>
        <location evidence="1">Cytoplasm</location>
        <location evidence="1">Cytoskeleton</location>
    </subcellularLocation>
</comment>
<comment type="similarity">
    <text evidence="2">Belongs to the F-actin-capping protein beta subunit family.</text>
</comment>
<organism>
    <name type="scientific">Caenorhabditis elegans</name>
    <dbReference type="NCBI Taxonomy" id="6239"/>
    <lineage>
        <taxon>Eukaryota</taxon>
        <taxon>Metazoa</taxon>
        <taxon>Ecdysozoa</taxon>
        <taxon>Nematoda</taxon>
        <taxon>Chromadorea</taxon>
        <taxon>Rhabditida</taxon>
        <taxon>Rhabditina</taxon>
        <taxon>Rhabditomorpha</taxon>
        <taxon>Rhabditoidea</taxon>
        <taxon>Rhabditidae</taxon>
        <taxon>Peloderinae</taxon>
        <taxon>Caenorhabditis</taxon>
    </lineage>
</organism>
<gene>
    <name type="primary">cap-2</name>
    <name type="ORF">M106.5</name>
</gene>
<evidence type="ECO:0000250" key="1">
    <source>
        <dbReference type="UniProtKB" id="A9XFX6"/>
    </source>
</evidence>
<evidence type="ECO:0000305" key="2"/>
<feature type="chain" id="PRO_0000204637" description="F-actin-capping protein subunit beta">
    <location>
        <begin position="1"/>
        <end position="270"/>
    </location>
</feature>
<keyword id="KW-0117">Actin capping</keyword>
<keyword id="KW-0009">Actin-binding</keyword>
<keyword id="KW-0963">Cytoplasm</keyword>
<keyword id="KW-0206">Cytoskeleton</keyword>
<keyword id="KW-1185">Reference proteome</keyword>
<accession>P34686</accession>
<proteinExistence type="evidence at transcript level"/>